<accession>C4L5Y4</accession>
<comment type="similarity">
    <text evidence="1">Belongs to the bacterial ribosomal protein bL28 family.</text>
</comment>
<dbReference type="EMBL" id="CP001615">
    <property type="protein sequence ID" value="ACQ71790.1"/>
    <property type="molecule type" value="Genomic_DNA"/>
</dbReference>
<dbReference type="RefSeq" id="WP_015881349.1">
    <property type="nucleotide sequence ID" value="NZ_MOEL01000013.1"/>
</dbReference>
<dbReference type="SMR" id="C4L5Y4"/>
<dbReference type="STRING" id="360911.EAT1b_2876"/>
<dbReference type="GeneID" id="94372460"/>
<dbReference type="KEGG" id="eat:EAT1b_2876"/>
<dbReference type="eggNOG" id="COG0227">
    <property type="taxonomic scope" value="Bacteria"/>
</dbReference>
<dbReference type="HOGENOM" id="CLU_064548_7_1_9"/>
<dbReference type="OrthoDB" id="9805609at2"/>
<dbReference type="Proteomes" id="UP000000716">
    <property type="component" value="Chromosome"/>
</dbReference>
<dbReference type="GO" id="GO:1990904">
    <property type="term" value="C:ribonucleoprotein complex"/>
    <property type="evidence" value="ECO:0007669"/>
    <property type="project" value="UniProtKB-KW"/>
</dbReference>
<dbReference type="GO" id="GO:0005840">
    <property type="term" value="C:ribosome"/>
    <property type="evidence" value="ECO:0007669"/>
    <property type="project" value="UniProtKB-KW"/>
</dbReference>
<dbReference type="GO" id="GO:0003735">
    <property type="term" value="F:structural constituent of ribosome"/>
    <property type="evidence" value="ECO:0007669"/>
    <property type="project" value="InterPro"/>
</dbReference>
<dbReference type="GO" id="GO:0006412">
    <property type="term" value="P:translation"/>
    <property type="evidence" value="ECO:0007669"/>
    <property type="project" value="UniProtKB-UniRule"/>
</dbReference>
<dbReference type="Gene3D" id="2.30.170.40">
    <property type="entry name" value="Ribosomal protein L28/L24"/>
    <property type="match status" value="1"/>
</dbReference>
<dbReference type="HAMAP" id="MF_00373">
    <property type="entry name" value="Ribosomal_bL28"/>
    <property type="match status" value="1"/>
</dbReference>
<dbReference type="InterPro" id="IPR050096">
    <property type="entry name" value="Bacterial_rp_bL28"/>
</dbReference>
<dbReference type="InterPro" id="IPR026569">
    <property type="entry name" value="Ribosomal_bL28"/>
</dbReference>
<dbReference type="InterPro" id="IPR034704">
    <property type="entry name" value="Ribosomal_bL28/bL31-like_sf"/>
</dbReference>
<dbReference type="InterPro" id="IPR001383">
    <property type="entry name" value="Ribosomal_bL28_bact-type"/>
</dbReference>
<dbReference type="InterPro" id="IPR037147">
    <property type="entry name" value="Ribosomal_bL28_sf"/>
</dbReference>
<dbReference type="NCBIfam" id="TIGR00009">
    <property type="entry name" value="L28"/>
    <property type="match status" value="1"/>
</dbReference>
<dbReference type="PANTHER" id="PTHR39080">
    <property type="entry name" value="50S RIBOSOMAL PROTEIN L28"/>
    <property type="match status" value="1"/>
</dbReference>
<dbReference type="PANTHER" id="PTHR39080:SF1">
    <property type="entry name" value="LARGE RIBOSOMAL SUBUNIT PROTEIN BL28A"/>
    <property type="match status" value="1"/>
</dbReference>
<dbReference type="Pfam" id="PF00830">
    <property type="entry name" value="Ribosomal_L28"/>
    <property type="match status" value="1"/>
</dbReference>
<dbReference type="SUPFAM" id="SSF143800">
    <property type="entry name" value="L28p-like"/>
    <property type="match status" value="1"/>
</dbReference>
<protein>
    <recommendedName>
        <fullName evidence="1">Large ribosomal subunit protein bL28</fullName>
    </recommendedName>
    <alternativeName>
        <fullName evidence="3">50S ribosomal protein L28</fullName>
    </alternativeName>
</protein>
<organism>
    <name type="scientific">Exiguobacterium sp. (strain ATCC BAA-1283 / AT1b)</name>
    <dbReference type="NCBI Taxonomy" id="360911"/>
    <lineage>
        <taxon>Bacteria</taxon>
        <taxon>Bacillati</taxon>
        <taxon>Bacillota</taxon>
        <taxon>Bacilli</taxon>
        <taxon>Bacillales</taxon>
        <taxon>Bacillales Family XII. Incertae Sedis</taxon>
        <taxon>Exiguobacterium</taxon>
    </lineage>
</organism>
<keyword id="KW-0687">Ribonucleoprotein</keyword>
<keyword id="KW-0689">Ribosomal protein</keyword>
<proteinExistence type="inferred from homology"/>
<sequence>MARKCYVTGKSPKSGNNRSHALNKTKRTWGVNVQKVRILVDGKPKRVWVSARALKSGLVERV</sequence>
<reference key="1">
    <citation type="journal article" date="2011" name="J. Bacteriol.">
        <title>Complete genome sequence of the Thermophilic Bacterium Exiguobacterium sp. AT1b.</title>
        <authorList>
            <person name="Vishnivetskaya T.A."/>
            <person name="Lucas S."/>
            <person name="Copeland A."/>
            <person name="Lapidus A."/>
            <person name="Glavina del Rio T."/>
            <person name="Dalin E."/>
            <person name="Tice H."/>
            <person name="Bruce D.C."/>
            <person name="Goodwin L.A."/>
            <person name="Pitluck S."/>
            <person name="Saunders E."/>
            <person name="Brettin T."/>
            <person name="Detter C."/>
            <person name="Han C."/>
            <person name="Larimer F."/>
            <person name="Land M.L."/>
            <person name="Hauser L.J."/>
            <person name="Kyrpides N.C."/>
            <person name="Ovchinnikova G."/>
            <person name="Kathariou S."/>
            <person name="Ramaley R.F."/>
            <person name="Rodrigues D.F."/>
            <person name="Hendrix C."/>
            <person name="Richardson P."/>
            <person name="Tiedje J.M."/>
        </authorList>
    </citation>
    <scope>NUCLEOTIDE SEQUENCE [LARGE SCALE GENOMIC DNA]</scope>
    <source>
        <strain>ATCC BAA-1283 / AT1b</strain>
    </source>
</reference>
<evidence type="ECO:0000255" key="1">
    <source>
        <dbReference type="HAMAP-Rule" id="MF_00373"/>
    </source>
</evidence>
<evidence type="ECO:0000256" key="2">
    <source>
        <dbReference type="SAM" id="MobiDB-lite"/>
    </source>
</evidence>
<evidence type="ECO:0000305" key="3"/>
<name>RL28_EXISA</name>
<gene>
    <name evidence="1" type="primary">rpmB</name>
    <name type="ordered locus">EAT1b_2876</name>
</gene>
<feature type="chain" id="PRO_1000205599" description="Large ribosomal subunit protein bL28">
    <location>
        <begin position="1"/>
        <end position="62"/>
    </location>
</feature>
<feature type="region of interest" description="Disordered" evidence="2">
    <location>
        <begin position="1"/>
        <end position="26"/>
    </location>
</feature>
<feature type="compositionally biased region" description="Polar residues" evidence="2">
    <location>
        <begin position="11"/>
        <end position="20"/>
    </location>
</feature>